<keyword id="KW-0472">Membrane</keyword>
<keyword id="KW-1185">Reference proteome</keyword>
<keyword id="KW-0812">Transmembrane</keyword>
<keyword id="KW-1133">Transmembrane helix</keyword>
<evidence type="ECO:0000255" key="1"/>
<evidence type="ECO:0000256" key="2">
    <source>
        <dbReference type="SAM" id="MobiDB-lite"/>
    </source>
</evidence>
<evidence type="ECO:0000305" key="3"/>
<name>TM215_MOUSE</name>
<comment type="subcellular location">
    <subcellularLocation>
        <location evidence="3">Membrane</location>
        <topology evidence="3">Multi-pass membrane protein</topology>
    </subcellularLocation>
</comment>
<organism>
    <name type="scientific">Mus musculus</name>
    <name type="common">Mouse</name>
    <dbReference type="NCBI Taxonomy" id="10090"/>
    <lineage>
        <taxon>Eukaryota</taxon>
        <taxon>Metazoa</taxon>
        <taxon>Chordata</taxon>
        <taxon>Craniata</taxon>
        <taxon>Vertebrata</taxon>
        <taxon>Euteleostomi</taxon>
        <taxon>Mammalia</taxon>
        <taxon>Eutheria</taxon>
        <taxon>Euarchontoglires</taxon>
        <taxon>Glires</taxon>
        <taxon>Rodentia</taxon>
        <taxon>Myomorpha</taxon>
        <taxon>Muroidea</taxon>
        <taxon>Muridae</taxon>
        <taxon>Murinae</taxon>
        <taxon>Mus</taxon>
        <taxon>Mus</taxon>
    </lineage>
</organism>
<dbReference type="EMBL" id="AK044627">
    <property type="protein sequence ID" value="BAC32008.1"/>
    <property type="molecule type" value="mRNA"/>
</dbReference>
<dbReference type="EMBL" id="AL844182">
    <property type="status" value="NOT_ANNOTATED_CDS"/>
    <property type="molecule type" value="Genomic_DNA"/>
</dbReference>
<dbReference type="EMBL" id="BC148227">
    <property type="protein sequence ID" value="AAI48228.1"/>
    <property type="molecule type" value="mRNA"/>
</dbReference>
<dbReference type="EMBL" id="BC148284">
    <property type="protein sequence ID" value="AAI48285.1"/>
    <property type="molecule type" value="mRNA"/>
</dbReference>
<dbReference type="CCDS" id="CCDS18046.1"/>
<dbReference type="RefSeq" id="NP_001159481.1">
    <property type="nucleotide sequence ID" value="NM_001166009.1"/>
</dbReference>
<dbReference type="RefSeq" id="NP_796149.2">
    <property type="nucleotide sequence ID" value="NM_177175.4"/>
</dbReference>
<dbReference type="BioGRID" id="236071">
    <property type="interactions" value="1"/>
</dbReference>
<dbReference type="STRING" id="10090.ENSMUSP00000052129"/>
<dbReference type="iPTMnet" id="A7E1Z1"/>
<dbReference type="PhosphoSitePlus" id="A7E1Z1"/>
<dbReference type="PaxDb" id="10090-ENSMUSP00000052129"/>
<dbReference type="ProteomicsDB" id="258923"/>
<dbReference type="Antibodypedia" id="63219">
    <property type="antibodies" value="24 antibodies from 9 providers"/>
</dbReference>
<dbReference type="DNASU" id="320500"/>
<dbReference type="Ensembl" id="ENSMUST00000049655.3">
    <property type="protein sequence ID" value="ENSMUSP00000052129.3"/>
    <property type="gene ID" value="ENSMUSG00000046593.4"/>
</dbReference>
<dbReference type="Ensembl" id="ENSMUST00000179526.2">
    <property type="protein sequence ID" value="ENSMUSP00000136595.2"/>
    <property type="gene ID" value="ENSMUSG00000046593.4"/>
</dbReference>
<dbReference type="GeneID" id="320500"/>
<dbReference type="KEGG" id="mmu:320500"/>
<dbReference type="UCSC" id="uc008shm.1">
    <property type="organism name" value="mouse"/>
</dbReference>
<dbReference type="AGR" id="MGI:2444167"/>
<dbReference type="CTD" id="401498"/>
<dbReference type="MGI" id="MGI:2444167">
    <property type="gene designation" value="Tmem215"/>
</dbReference>
<dbReference type="VEuPathDB" id="HostDB:ENSMUSG00000046593"/>
<dbReference type="eggNOG" id="ENOG502QZ55">
    <property type="taxonomic scope" value="Eukaryota"/>
</dbReference>
<dbReference type="GeneTree" id="ENSGT00390000006684"/>
<dbReference type="HOGENOM" id="CLU_1165487_0_0_1"/>
<dbReference type="InParanoid" id="A7E1Z1"/>
<dbReference type="OMA" id="DRSDCPE"/>
<dbReference type="OrthoDB" id="9304762at2759"/>
<dbReference type="PhylomeDB" id="A7E1Z1"/>
<dbReference type="TreeFam" id="TF335695"/>
<dbReference type="BioGRID-ORCS" id="320500">
    <property type="hits" value="1 hit in 79 CRISPR screens"/>
</dbReference>
<dbReference type="PRO" id="PR:A7E1Z1"/>
<dbReference type="Proteomes" id="UP000000589">
    <property type="component" value="Chromosome 4"/>
</dbReference>
<dbReference type="RNAct" id="A7E1Z1">
    <property type="molecule type" value="protein"/>
</dbReference>
<dbReference type="Bgee" id="ENSMUSG00000046593">
    <property type="expression patterns" value="Expressed in islet of Langerhans and 50 other cell types or tissues"/>
</dbReference>
<dbReference type="ExpressionAtlas" id="A7E1Z1">
    <property type="expression patterns" value="baseline and differential"/>
</dbReference>
<dbReference type="GO" id="GO:0016020">
    <property type="term" value="C:membrane"/>
    <property type="evidence" value="ECO:0007669"/>
    <property type="project" value="UniProtKB-SubCell"/>
</dbReference>
<dbReference type="GO" id="GO:0001525">
    <property type="term" value="P:angiogenesis"/>
    <property type="evidence" value="ECO:0000315"/>
    <property type="project" value="MGI"/>
</dbReference>
<dbReference type="GO" id="GO:0046671">
    <property type="term" value="P:negative regulation of retinal cell programmed cell death"/>
    <property type="evidence" value="ECO:0000315"/>
    <property type="project" value="MGI"/>
</dbReference>
<dbReference type="GO" id="GO:0002040">
    <property type="term" value="P:sprouting angiogenesis"/>
    <property type="evidence" value="ECO:0000315"/>
    <property type="project" value="MGI"/>
</dbReference>
<dbReference type="InterPro" id="IPR031486">
    <property type="entry name" value="TMEM215"/>
</dbReference>
<dbReference type="PANTHER" id="PTHR31922">
    <property type="entry name" value="TRANSMEMBRANE PROTEIN 215"/>
    <property type="match status" value="1"/>
</dbReference>
<dbReference type="PANTHER" id="PTHR31922:SF2">
    <property type="entry name" value="TRANSMEMBRANE PROTEIN 215"/>
    <property type="match status" value="1"/>
</dbReference>
<dbReference type="Pfam" id="PF15746">
    <property type="entry name" value="TMEM215"/>
    <property type="match status" value="1"/>
</dbReference>
<gene>
    <name type="primary">Tmem215</name>
</gene>
<reference key="1">
    <citation type="journal article" date="2005" name="Science">
        <title>The transcriptional landscape of the mammalian genome.</title>
        <authorList>
            <person name="Carninci P."/>
            <person name="Kasukawa T."/>
            <person name="Katayama S."/>
            <person name="Gough J."/>
            <person name="Frith M.C."/>
            <person name="Maeda N."/>
            <person name="Oyama R."/>
            <person name="Ravasi T."/>
            <person name="Lenhard B."/>
            <person name="Wells C."/>
            <person name="Kodzius R."/>
            <person name="Shimokawa K."/>
            <person name="Bajic V.B."/>
            <person name="Brenner S.E."/>
            <person name="Batalov S."/>
            <person name="Forrest A.R."/>
            <person name="Zavolan M."/>
            <person name="Davis M.J."/>
            <person name="Wilming L.G."/>
            <person name="Aidinis V."/>
            <person name="Allen J.E."/>
            <person name="Ambesi-Impiombato A."/>
            <person name="Apweiler R."/>
            <person name="Aturaliya R.N."/>
            <person name="Bailey T.L."/>
            <person name="Bansal M."/>
            <person name="Baxter L."/>
            <person name="Beisel K.W."/>
            <person name="Bersano T."/>
            <person name="Bono H."/>
            <person name="Chalk A.M."/>
            <person name="Chiu K.P."/>
            <person name="Choudhary V."/>
            <person name="Christoffels A."/>
            <person name="Clutterbuck D.R."/>
            <person name="Crowe M.L."/>
            <person name="Dalla E."/>
            <person name="Dalrymple B.P."/>
            <person name="de Bono B."/>
            <person name="Della Gatta G."/>
            <person name="di Bernardo D."/>
            <person name="Down T."/>
            <person name="Engstrom P."/>
            <person name="Fagiolini M."/>
            <person name="Faulkner G."/>
            <person name="Fletcher C.F."/>
            <person name="Fukushima T."/>
            <person name="Furuno M."/>
            <person name="Futaki S."/>
            <person name="Gariboldi M."/>
            <person name="Georgii-Hemming P."/>
            <person name="Gingeras T.R."/>
            <person name="Gojobori T."/>
            <person name="Green R.E."/>
            <person name="Gustincich S."/>
            <person name="Harbers M."/>
            <person name="Hayashi Y."/>
            <person name="Hensch T.K."/>
            <person name="Hirokawa N."/>
            <person name="Hill D."/>
            <person name="Huminiecki L."/>
            <person name="Iacono M."/>
            <person name="Ikeo K."/>
            <person name="Iwama A."/>
            <person name="Ishikawa T."/>
            <person name="Jakt M."/>
            <person name="Kanapin A."/>
            <person name="Katoh M."/>
            <person name="Kawasawa Y."/>
            <person name="Kelso J."/>
            <person name="Kitamura H."/>
            <person name="Kitano H."/>
            <person name="Kollias G."/>
            <person name="Krishnan S.P."/>
            <person name="Kruger A."/>
            <person name="Kummerfeld S.K."/>
            <person name="Kurochkin I.V."/>
            <person name="Lareau L.F."/>
            <person name="Lazarevic D."/>
            <person name="Lipovich L."/>
            <person name="Liu J."/>
            <person name="Liuni S."/>
            <person name="McWilliam S."/>
            <person name="Madan Babu M."/>
            <person name="Madera M."/>
            <person name="Marchionni L."/>
            <person name="Matsuda H."/>
            <person name="Matsuzawa S."/>
            <person name="Miki H."/>
            <person name="Mignone F."/>
            <person name="Miyake S."/>
            <person name="Morris K."/>
            <person name="Mottagui-Tabar S."/>
            <person name="Mulder N."/>
            <person name="Nakano N."/>
            <person name="Nakauchi H."/>
            <person name="Ng P."/>
            <person name="Nilsson R."/>
            <person name="Nishiguchi S."/>
            <person name="Nishikawa S."/>
            <person name="Nori F."/>
            <person name="Ohara O."/>
            <person name="Okazaki Y."/>
            <person name="Orlando V."/>
            <person name="Pang K.C."/>
            <person name="Pavan W.J."/>
            <person name="Pavesi G."/>
            <person name="Pesole G."/>
            <person name="Petrovsky N."/>
            <person name="Piazza S."/>
            <person name="Reed J."/>
            <person name="Reid J.F."/>
            <person name="Ring B.Z."/>
            <person name="Ringwald M."/>
            <person name="Rost B."/>
            <person name="Ruan Y."/>
            <person name="Salzberg S.L."/>
            <person name="Sandelin A."/>
            <person name="Schneider C."/>
            <person name="Schoenbach C."/>
            <person name="Sekiguchi K."/>
            <person name="Semple C.A."/>
            <person name="Seno S."/>
            <person name="Sessa L."/>
            <person name="Sheng Y."/>
            <person name="Shibata Y."/>
            <person name="Shimada H."/>
            <person name="Shimada K."/>
            <person name="Silva D."/>
            <person name="Sinclair B."/>
            <person name="Sperling S."/>
            <person name="Stupka E."/>
            <person name="Sugiura K."/>
            <person name="Sultana R."/>
            <person name="Takenaka Y."/>
            <person name="Taki K."/>
            <person name="Tammoja K."/>
            <person name="Tan S.L."/>
            <person name="Tang S."/>
            <person name="Taylor M.S."/>
            <person name="Tegner J."/>
            <person name="Teichmann S.A."/>
            <person name="Ueda H.R."/>
            <person name="van Nimwegen E."/>
            <person name="Verardo R."/>
            <person name="Wei C.L."/>
            <person name="Yagi K."/>
            <person name="Yamanishi H."/>
            <person name="Zabarovsky E."/>
            <person name="Zhu S."/>
            <person name="Zimmer A."/>
            <person name="Hide W."/>
            <person name="Bult C."/>
            <person name="Grimmond S.M."/>
            <person name="Teasdale R.D."/>
            <person name="Liu E.T."/>
            <person name="Brusic V."/>
            <person name="Quackenbush J."/>
            <person name="Wahlestedt C."/>
            <person name="Mattick J.S."/>
            <person name="Hume D.A."/>
            <person name="Kai C."/>
            <person name="Sasaki D."/>
            <person name="Tomaru Y."/>
            <person name="Fukuda S."/>
            <person name="Kanamori-Katayama M."/>
            <person name="Suzuki M."/>
            <person name="Aoki J."/>
            <person name="Arakawa T."/>
            <person name="Iida J."/>
            <person name="Imamura K."/>
            <person name="Itoh M."/>
            <person name="Kato T."/>
            <person name="Kawaji H."/>
            <person name="Kawagashira N."/>
            <person name="Kawashima T."/>
            <person name="Kojima M."/>
            <person name="Kondo S."/>
            <person name="Konno H."/>
            <person name="Nakano K."/>
            <person name="Ninomiya N."/>
            <person name="Nishio T."/>
            <person name="Okada M."/>
            <person name="Plessy C."/>
            <person name="Shibata K."/>
            <person name="Shiraki T."/>
            <person name="Suzuki S."/>
            <person name="Tagami M."/>
            <person name="Waki K."/>
            <person name="Watahiki A."/>
            <person name="Okamura-Oho Y."/>
            <person name="Suzuki H."/>
            <person name="Kawai J."/>
            <person name="Hayashizaki Y."/>
        </authorList>
    </citation>
    <scope>NUCLEOTIDE SEQUENCE [LARGE SCALE MRNA]</scope>
    <source>
        <strain>C57BL/6J</strain>
        <tissue>Retina</tissue>
    </source>
</reference>
<reference key="2">
    <citation type="journal article" date="2009" name="PLoS Biol.">
        <title>Lineage-specific biology revealed by a finished genome assembly of the mouse.</title>
        <authorList>
            <person name="Church D.M."/>
            <person name="Goodstadt L."/>
            <person name="Hillier L.W."/>
            <person name="Zody M.C."/>
            <person name="Goldstein S."/>
            <person name="She X."/>
            <person name="Bult C.J."/>
            <person name="Agarwala R."/>
            <person name="Cherry J.L."/>
            <person name="DiCuccio M."/>
            <person name="Hlavina W."/>
            <person name="Kapustin Y."/>
            <person name="Meric P."/>
            <person name="Maglott D."/>
            <person name="Birtle Z."/>
            <person name="Marques A.C."/>
            <person name="Graves T."/>
            <person name="Zhou S."/>
            <person name="Teague B."/>
            <person name="Potamousis K."/>
            <person name="Churas C."/>
            <person name="Place M."/>
            <person name="Herschleb J."/>
            <person name="Runnheim R."/>
            <person name="Forrest D."/>
            <person name="Amos-Landgraf J."/>
            <person name="Schwartz D.C."/>
            <person name="Cheng Z."/>
            <person name="Lindblad-Toh K."/>
            <person name="Eichler E.E."/>
            <person name="Ponting C.P."/>
        </authorList>
    </citation>
    <scope>NUCLEOTIDE SEQUENCE [LARGE SCALE GENOMIC DNA]</scope>
    <source>
        <strain>C57BL/6J</strain>
    </source>
</reference>
<reference key="3">
    <citation type="journal article" date="2004" name="Genome Res.">
        <title>The status, quality, and expansion of the NIH full-length cDNA project: the Mammalian Gene Collection (MGC).</title>
        <authorList>
            <consortium name="The MGC Project Team"/>
        </authorList>
    </citation>
    <scope>NUCLEOTIDE SEQUENCE [LARGE SCALE MRNA]</scope>
</reference>
<protein>
    <recommendedName>
        <fullName>Transmembrane protein 215</fullName>
    </recommendedName>
</protein>
<sequence length="235" mass="25812">MRPDDINPRTGLVVALVSVFLVFGFMFTVSGMKGETLGNIPLLAIGPAICLPGIAAIALARKTEGCTKWPENELLWVRKLPCFRKPKDKEVVELLRTPSDLESGKGSSDELAKKAGLRGKQLPQGPGEVPMASSVTTPTPTEEGECQSLVQSGRQEETSRYLDGYCPSASSLAYSALDAKCSAWDRSDRPEPEDSIFFVPQDSIIVCSYKQNSPYDRYCCYINQSQGRWDHETIV</sequence>
<accession>A7E1Z1</accession>
<accession>Q8C8R5</accession>
<proteinExistence type="evidence at transcript level"/>
<feature type="chain" id="PRO_0000319325" description="Transmembrane protein 215">
    <location>
        <begin position="1"/>
        <end position="235"/>
    </location>
</feature>
<feature type="transmembrane region" description="Helical" evidence="1">
    <location>
        <begin position="12"/>
        <end position="32"/>
    </location>
</feature>
<feature type="transmembrane region" description="Helical" evidence="1">
    <location>
        <begin position="40"/>
        <end position="60"/>
    </location>
</feature>
<feature type="region of interest" description="Disordered" evidence="2">
    <location>
        <begin position="99"/>
        <end position="146"/>
    </location>
</feature>
<feature type="sequence conflict" description="In Ref. 1; BAC32008." evidence="3" ref="1">
    <original>K</original>
    <variation>R</variation>
    <location>
        <position position="79"/>
    </location>
</feature>